<name>RL15_PSEAE</name>
<comment type="function">
    <text evidence="1">Binds to the 23S rRNA.</text>
</comment>
<comment type="subunit">
    <text evidence="1">Part of the 50S ribosomal subunit.</text>
</comment>
<comment type="similarity">
    <text evidence="1">Belongs to the universal ribosomal protein uL15 family.</text>
</comment>
<keyword id="KW-0002">3D-structure</keyword>
<keyword id="KW-1185">Reference proteome</keyword>
<keyword id="KW-0687">Ribonucleoprotein</keyword>
<keyword id="KW-0689">Ribosomal protein</keyword>
<keyword id="KW-0694">RNA-binding</keyword>
<keyword id="KW-0699">rRNA-binding</keyword>
<feature type="chain" id="PRO_0000104782" description="Large ribosomal subunit protein uL15">
    <location>
        <begin position="1"/>
        <end position="144"/>
    </location>
</feature>
<feature type="region of interest" description="Disordered" evidence="2">
    <location>
        <begin position="1"/>
        <end position="57"/>
    </location>
</feature>
<feature type="compositionally biased region" description="Gly residues" evidence="2">
    <location>
        <begin position="21"/>
        <end position="31"/>
    </location>
</feature>
<sequence>MQLNDLRSAPGARREKHRPGRGIGSGLGKTGGRGHKGLTSRSGGKVAPGFEGGQQPLHRRLPKFGFVSLKAMDRAEVRTSELAKVEGDVVSLQTLKDANLINQHVQRVKVMLSGEVGRAVTLKGIAATKGARAAIEAAGGKFED</sequence>
<evidence type="ECO:0000255" key="1">
    <source>
        <dbReference type="HAMAP-Rule" id="MF_01341"/>
    </source>
</evidence>
<evidence type="ECO:0000256" key="2">
    <source>
        <dbReference type="SAM" id="MobiDB-lite"/>
    </source>
</evidence>
<evidence type="ECO:0000305" key="3"/>
<dbReference type="EMBL" id="AE004091">
    <property type="protein sequence ID" value="AAG07632.1"/>
    <property type="molecule type" value="Genomic_DNA"/>
</dbReference>
<dbReference type="PIR" id="B83114">
    <property type="entry name" value="B83114"/>
</dbReference>
<dbReference type="RefSeq" id="NP_252934.1">
    <property type="nucleotide sequence ID" value="NC_002516.2"/>
</dbReference>
<dbReference type="RefSeq" id="WP_003093695.1">
    <property type="nucleotide sequence ID" value="NZ_QZGE01000028.1"/>
</dbReference>
<dbReference type="PDB" id="7UNR">
    <property type="method" value="EM"/>
    <property type="resolution" value="2.90 A"/>
    <property type="chains" value="N=1-144"/>
</dbReference>
<dbReference type="PDB" id="7UNU">
    <property type="method" value="EM"/>
    <property type="resolution" value="2.90 A"/>
    <property type="chains" value="N=1-144"/>
</dbReference>
<dbReference type="PDB" id="7UNV">
    <property type="method" value="EM"/>
    <property type="resolution" value="2.70 A"/>
    <property type="chains" value="N=1-144"/>
</dbReference>
<dbReference type="PDB" id="7UNW">
    <property type="method" value="EM"/>
    <property type="resolution" value="2.60 A"/>
    <property type="chains" value="N=1-144"/>
</dbReference>
<dbReference type="PDB" id="8CD1">
    <property type="method" value="EM"/>
    <property type="resolution" value="3.00 A"/>
    <property type="chains" value="L=1-144"/>
</dbReference>
<dbReference type="PDB" id="8RWG">
    <property type="method" value="EM"/>
    <property type="resolution" value="2.46 A"/>
    <property type="chains" value="L=1-144"/>
</dbReference>
<dbReference type="PDBsum" id="7UNR"/>
<dbReference type="PDBsum" id="7UNU"/>
<dbReference type="PDBsum" id="7UNV"/>
<dbReference type="PDBsum" id="7UNW"/>
<dbReference type="PDBsum" id="8CD1"/>
<dbReference type="PDBsum" id="8RWG"/>
<dbReference type="EMDB" id="EMD-16566"/>
<dbReference type="EMDB" id="EMD-19547"/>
<dbReference type="EMDB" id="EMD-26630"/>
<dbReference type="EMDB" id="EMD-26633"/>
<dbReference type="EMDB" id="EMD-26634"/>
<dbReference type="EMDB" id="EMD-26635"/>
<dbReference type="SMR" id="Q9HWF4"/>
<dbReference type="FunCoup" id="Q9HWF4">
    <property type="interactions" value="854"/>
</dbReference>
<dbReference type="STRING" id="208964.PA4244"/>
<dbReference type="PaxDb" id="208964-PA4244"/>
<dbReference type="DNASU" id="881805"/>
<dbReference type="GeneID" id="77219217"/>
<dbReference type="GeneID" id="881805"/>
<dbReference type="KEGG" id="pae:PA4244"/>
<dbReference type="PATRIC" id="fig|208964.12.peg.4445"/>
<dbReference type="PseudoCAP" id="PA4244"/>
<dbReference type="HOGENOM" id="CLU_055188_4_2_6"/>
<dbReference type="InParanoid" id="Q9HWF4"/>
<dbReference type="OrthoDB" id="9810293at2"/>
<dbReference type="PhylomeDB" id="Q9HWF4"/>
<dbReference type="BioCyc" id="PAER208964:G1FZ6-4317-MONOMER"/>
<dbReference type="PRO" id="PR:Q9HWF4"/>
<dbReference type="Proteomes" id="UP000002438">
    <property type="component" value="Chromosome"/>
</dbReference>
<dbReference type="GO" id="GO:0022625">
    <property type="term" value="C:cytosolic large ribosomal subunit"/>
    <property type="evidence" value="ECO:0000318"/>
    <property type="project" value="GO_Central"/>
</dbReference>
<dbReference type="GO" id="GO:0019843">
    <property type="term" value="F:rRNA binding"/>
    <property type="evidence" value="ECO:0007669"/>
    <property type="project" value="UniProtKB-UniRule"/>
</dbReference>
<dbReference type="GO" id="GO:0003735">
    <property type="term" value="F:structural constituent of ribosome"/>
    <property type="evidence" value="ECO:0000318"/>
    <property type="project" value="GO_Central"/>
</dbReference>
<dbReference type="GO" id="GO:0006412">
    <property type="term" value="P:translation"/>
    <property type="evidence" value="ECO:0007669"/>
    <property type="project" value="UniProtKB-UniRule"/>
</dbReference>
<dbReference type="FunFam" id="3.100.10.10:FF:000003">
    <property type="entry name" value="50S ribosomal protein L15"/>
    <property type="match status" value="1"/>
</dbReference>
<dbReference type="Gene3D" id="3.100.10.10">
    <property type="match status" value="1"/>
</dbReference>
<dbReference type="HAMAP" id="MF_01341">
    <property type="entry name" value="Ribosomal_uL15"/>
    <property type="match status" value="1"/>
</dbReference>
<dbReference type="InterPro" id="IPR030878">
    <property type="entry name" value="Ribosomal_uL15"/>
</dbReference>
<dbReference type="InterPro" id="IPR021131">
    <property type="entry name" value="Ribosomal_uL15/eL18"/>
</dbReference>
<dbReference type="InterPro" id="IPR036227">
    <property type="entry name" value="Ribosomal_uL15/eL18_sf"/>
</dbReference>
<dbReference type="InterPro" id="IPR005749">
    <property type="entry name" value="Ribosomal_uL15_bac-type"/>
</dbReference>
<dbReference type="InterPro" id="IPR001196">
    <property type="entry name" value="Ribosomal_uL15_CS"/>
</dbReference>
<dbReference type="NCBIfam" id="TIGR01071">
    <property type="entry name" value="rplO_bact"/>
    <property type="match status" value="1"/>
</dbReference>
<dbReference type="PANTHER" id="PTHR12934">
    <property type="entry name" value="50S RIBOSOMAL PROTEIN L15"/>
    <property type="match status" value="1"/>
</dbReference>
<dbReference type="PANTHER" id="PTHR12934:SF11">
    <property type="entry name" value="LARGE RIBOSOMAL SUBUNIT PROTEIN UL15M"/>
    <property type="match status" value="1"/>
</dbReference>
<dbReference type="Pfam" id="PF00828">
    <property type="entry name" value="Ribosomal_L27A"/>
    <property type="match status" value="1"/>
</dbReference>
<dbReference type="SUPFAM" id="SSF52080">
    <property type="entry name" value="Ribosomal proteins L15p and L18e"/>
    <property type="match status" value="1"/>
</dbReference>
<dbReference type="PROSITE" id="PS00475">
    <property type="entry name" value="RIBOSOMAL_L15"/>
    <property type="match status" value="1"/>
</dbReference>
<reference key="1">
    <citation type="journal article" date="2000" name="Nature">
        <title>Complete genome sequence of Pseudomonas aeruginosa PAO1, an opportunistic pathogen.</title>
        <authorList>
            <person name="Stover C.K."/>
            <person name="Pham X.-Q.T."/>
            <person name="Erwin A.L."/>
            <person name="Mizoguchi S.D."/>
            <person name="Warrener P."/>
            <person name="Hickey M.J."/>
            <person name="Brinkman F.S.L."/>
            <person name="Hufnagle W.O."/>
            <person name="Kowalik D.J."/>
            <person name="Lagrou M."/>
            <person name="Garber R.L."/>
            <person name="Goltry L."/>
            <person name="Tolentino E."/>
            <person name="Westbrock-Wadman S."/>
            <person name="Yuan Y."/>
            <person name="Brody L.L."/>
            <person name="Coulter S.N."/>
            <person name="Folger K.R."/>
            <person name="Kas A."/>
            <person name="Larbig K."/>
            <person name="Lim R.M."/>
            <person name="Smith K.A."/>
            <person name="Spencer D.H."/>
            <person name="Wong G.K.-S."/>
            <person name="Wu Z."/>
            <person name="Paulsen I.T."/>
            <person name="Reizer J."/>
            <person name="Saier M.H. Jr."/>
            <person name="Hancock R.E.W."/>
            <person name="Lory S."/>
            <person name="Olson M.V."/>
        </authorList>
    </citation>
    <scope>NUCLEOTIDE SEQUENCE [LARGE SCALE GENOMIC DNA]</scope>
    <source>
        <strain>ATCC 15692 / DSM 22644 / CIP 104116 / JCM 14847 / LMG 12228 / 1C / PRS 101 / PAO1</strain>
    </source>
</reference>
<accession>Q9HWF4</accession>
<organism>
    <name type="scientific">Pseudomonas aeruginosa (strain ATCC 15692 / DSM 22644 / CIP 104116 / JCM 14847 / LMG 12228 / 1C / PRS 101 / PAO1)</name>
    <dbReference type="NCBI Taxonomy" id="208964"/>
    <lineage>
        <taxon>Bacteria</taxon>
        <taxon>Pseudomonadati</taxon>
        <taxon>Pseudomonadota</taxon>
        <taxon>Gammaproteobacteria</taxon>
        <taxon>Pseudomonadales</taxon>
        <taxon>Pseudomonadaceae</taxon>
        <taxon>Pseudomonas</taxon>
    </lineage>
</organism>
<gene>
    <name evidence="1" type="primary">rplO</name>
    <name type="ordered locus">PA4244</name>
</gene>
<proteinExistence type="evidence at protein level"/>
<protein>
    <recommendedName>
        <fullName evidence="1">Large ribosomal subunit protein uL15</fullName>
    </recommendedName>
    <alternativeName>
        <fullName evidence="3">50S ribosomal protein L15</fullName>
    </alternativeName>
</protein>